<dbReference type="EC" id="5.2.1.8"/>
<dbReference type="EMBL" id="CM003151">
    <property type="protein sequence ID" value="KIS67634.1"/>
    <property type="molecule type" value="Genomic_DNA"/>
</dbReference>
<dbReference type="RefSeq" id="XP_011390789.1">
    <property type="nucleotide sequence ID" value="XM_011392487.1"/>
</dbReference>
<dbReference type="SMR" id="Q4P6X6"/>
<dbReference type="FunCoup" id="Q4P6X6">
    <property type="interactions" value="753"/>
</dbReference>
<dbReference type="STRING" id="237631.Q4P6X6"/>
<dbReference type="EnsemblFungi" id="KIS67634">
    <property type="protein sequence ID" value="KIS67634"/>
    <property type="gene ID" value="UMAG_10882"/>
</dbReference>
<dbReference type="GeneID" id="23566852"/>
<dbReference type="KEGG" id="uma:UMAG_10882"/>
<dbReference type="VEuPathDB" id="FungiDB:UMAG_10882"/>
<dbReference type="eggNOG" id="KOG0879">
    <property type="taxonomic scope" value="Eukaryota"/>
</dbReference>
<dbReference type="InParanoid" id="Q4P6X6"/>
<dbReference type="OrthoDB" id="193499at2759"/>
<dbReference type="Proteomes" id="UP000000561">
    <property type="component" value="Chromosome 12"/>
</dbReference>
<dbReference type="GO" id="GO:0005737">
    <property type="term" value="C:cytoplasm"/>
    <property type="evidence" value="ECO:0000318"/>
    <property type="project" value="GO_Central"/>
</dbReference>
<dbReference type="GO" id="GO:0043231">
    <property type="term" value="C:intracellular membrane-bounded organelle"/>
    <property type="evidence" value="ECO:0000318"/>
    <property type="project" value="GO_Central"/>
</dbReference>
<dbReference type="GO" id="GO:0005634">
    <property type="term" value="C:nucleus"/>
    <property type="evidence" value="ECO:0007669"/>
    <property type="project" value="UniProtKB-SubCell"/>
</dbReference>
<dbReference type="GO" id="GO:0016018">
    <property type="term" value="F:cyclosporin A binding"/>
    <property type="evidence" value="ECO:0000318"/>
    <property type="project" value="GO_Central"/>
</dbReference>
<dbReference type="GO" id="GO:0003755">
    <property type="term" value="F:peptidyl-prolyl cis-trans isomerase activity"/>
    <property type="evidence" value="ECO:0000318"/>
    <property type="project" value="GO_Central"/>
</dbReference>
<dbReference type="GO" id="GO:0006457">
    <property type="term" value="P:protein folding"/>
    <property type="evidence" value="ECO:0000318"/>
    <property type="project" value="GO_Central"/>
</dbReference>
<dbReference type="FunFam" id="2.40.100.10:FF:000025">
    <property type="entry name" value="Peptidyl-prolyl cis-trans isomerase CYP19-2"/>
    <property type="match status" value="1"/>
</dbReference>
<dbReference type="Gene3D" id="2.40.100.10">
    <property type="entry name" value="Cyclophilin-like"/>
    <property type="match status" value="1"/>
</dbReference>
<dbReference type="InterPro" id="IPR029000">
    <property type="entry name" value="Cyclophilin-like_dom_sf"/>
</dbReference>
<dbReference type="InterPro" id="IPR024936">
    <property type="entry name" value="Cyclophilin-type_PPIase"/>
</dbReference>
<dbReference type="InterPro" id="IPR020892">
    <property type="entry name" value="Cyclophilin-type_PPIase_CS"/>
</dbReference>
<dbReference type="InterPro" id="IPR002130">
    <property type="entry name" value="Cyclophilin-type_PPIase_dom"/>
</dbReference>
<dbReference type="PANTHER" id="PTHR11071">
    <property type="entry name" value="PEPTIDYL-PROLYL CIS-TRANS ISOMERASE"/>
    <property type="match status" value="1"/>
</dbReference>
<dbReference type="PANTHER" id="PTHR11071:SF561">
    <property type="entry name" value="PEPTIDYL-PROLYL CIS-TRANS ISOMERASE D-RELATED"/>
    <property type="match status" value="1"/>
</dbReference>
<dbReference type="Pfam" id="PF00160">
    <property type="entry name" value="Pro_isomerase"/>
    <property type="match status" value="1"/>
</dbReference>
<dbReference type="PIRSF" id="PIRSF001467">
    <property type="entry name" value="Peptidylpro_ismrse"/>
    <property type="match status" value="1"/>
</dbReference>
<dbReference type="PRINTS" id="PR00153">
    <property type="entry name" value="CSAPPISMRASE"/>
</dbReference>
<dbReference type="SUPFAM" id="SSF50891">
    <property type="entry name" value="Cyclophilin-like"/>
    <property type="match status" value="1"/>
</dbReference>
<dbReference type="PROSITE" id="PS00170">
    <property type="entry name" value="CSA_PPIASE_1"/>
    <property type="match status" value="1"/>
</dbReference>
<dbReference type="PROSITE" id="PS50072">
    <property type="entry name" value="CSA_PPIASE_2"/>
    <property type="match status" value="1"/>
</dbReference>
<name>PPIH_MYCMD</name>
<accession>Q4P6X6</accession>
<accession>A0A0D1DTN2</accession>
<gene>
    <name type="primary">CYP3</name>
    <name type="ORF">UMAG_10882</name>
</gene>
<sequence length="156" mass="17250">TPAGRLKCELFSDIVPRTSENFRQLCTGEFRPNHVPEGYKNSIFHRIIKDFMCQGGDFINADGTGSRSIYGDKFDDENFTLKHDKAGLLSMANSGPGTNGCQFFITAQPCPFLDGKHVVFGKVVDGLLTLRKMENVPTGANNRPKMAVRITQCGEM</sequence>
<proteinExistence type="inferred from homology"/>
<comment type="function">
    <text evidence="1">PPIases accelerate the folding of proteins. It catalyzes the cis-trans isomerization of proline imidic peptide bonds in oligopeptides (By similarity).</text>
</comment>
<comment type="catalytic activity">
    <reaction>
        <text>[protein]-peptidylproline (omega=180) = [protein]-peptidylproline (omega=0)</text>
        <dbReference type="Rhea" id="RHEA:16237"/>
        <dbReference type="Rhea" id="RHEA-COMP:10747"/>
        <dbReference type="Rhea" id="RHEA-COMP:10748"/>
        <dbReference type="ChEBI" id="CHEBI:83833"/>
        <dbReference type="ChEBI" id="CHEBI:83834"/>
        <dbReference type="EC" id="5.2.1.8"/>
    </reaction>
</comment>
<comment type="subcellular location">
    <subcellularLocation>
        <location evidence="1">Nucleus</location>
    </subcellularLocation>
</comment>
<comment type="similarity">
    <text evidence="3">Belongs to the cyclophilin-type PPIase family. PPIase H subfamily.</text>
</comment>
<evidence type="ECO:0000250" key="1"/>
<evidence type="ECO:0000255" key="2">
    <source>
        <dbReference type="PROSITE-ProRule" id="PRU00156"/>
    </source>
</evidence>
<evidence type="ECO:0000305" key="3"/>
<feature type="chain" id="PRO_0000232960" description="Peptidyl-prolyl cis-trans isomerase H">
    <location>
        <begin position="1" status="less than"/>
        <end position="156"/>
    </location>
</feature>
<feature type="domain" description="PPIase cyclophilin-type" evidence="2">
    <location>
        <begin position="1" status="less than"/>
        <end position="155"/>
    </location>
</feature>
<feature type="non-terminal residue">
    <location>
        <position position="1"/>
    </location>
</feature>
<reference key="1">
    <citation type="journal article" date="2006" name="Nature">
        <title>Insights from the genome of the biotrophic fungal plant pathogen Ustilago maydis.</title>
        <authorList>
            <person name="Kaemper J."/>
            <person name="Kahmann R."/>
            <person name="Boelker M."/>
            <person name="Ma L.-J."/>
            <person name="Brefort T."/>
            <person name="Saville B.J."/>
            <person name="Banuett F."/>
            <person name="Kronstad J.W."/>
            <person name="Gold S.E."/>
            <person name="Mueller O."/>
            <person name="Perlin M.H."/>
            <person name="Woesten H.A.B."/>
            <person name="de Vries R."/>
            <person name="Ruiz-Herrera J."/>
            <person name="Reynaga-Pena C.G."/>
            <person name="Snetselaar K."/>
            <person name="McCann M."/>
            <person name="Perez-Martin J."/>
            <person name="Feldbruegge M."/>
            <person name="Basse C.W."/>
            <person name="Steinberg G."/>
            <person name="Ibeas J.I."/>
            <person name="Holloman W."/>
            <person name="Guzman P."/>
            <person name="Farman M.L."/>
            <person name="Stajich J.E."/>
            <person name="Sentandreu R."/>
            <person name="Gonzalez-Prieto J.M."/>
            <person name="Kennell J.C."/>
            <person name="Molina L."/>
            <person name="Schirawski J."/>
            <person name="Mendoza-Mendoza A."/>
            <person name="Greilinger D."/>
            <person name="Muench K."/>
            <person name="Roessel N."/>
            <person name="Scherer M."/>
            <person name="Vranes M."/>
            <person name="Ladendorf O."/>
            <person name="Vincon V."/>
            <person name="Fuchs U."/>
            <person name="Sandrock B."/>
            <person name="Meng S."/>
            <person name="Ho E.C.H."/>
            <person name="Cahill M.J."/>
            <person name="Boyce K.J."/>
            <person name="Klose J."/>
            <person name="Klosterman S.J."/>
            <person name="Deelstra H.J."/>
            <person name="Ortiz-Castellanos L."/>
            <person name="Li W."/>
            <person name="Sanchez-Alonso P."/>
            <person name="Schreier P.H."/>
            <person name="Haeuser-Hahn I."/>
            <person name="Vaupel M."/>
            <person name="Koopmann E."/>
            <person name="Friedrich G."/>
            <person name="Voss H."/>
            <person name="Schlueter T."/>
            <person name="Margolis J."/>
            <person name="Platt D."/>
            <person name="Swimmer C."/>
            <person name="Gnirke A."/>
            <person name="Chen F."/>
            <person name="Vysotskaia V."/>
            <person name="Mannhaupt G."/>
            <person name="Gueldener U."/>
            <person name="Muensterkoetter M."/>
            <person name="Haase D."/>
            <person name="Oesterheld M."/>
            <person name="Mewes H.-W."/>
            <person name="Mauceli E.W."/>
            <person name="DeCaprio D."/>
            <person name="Wade C.M."/>
            <person name="Butler J."/>
            <person name="Young S.K."/>
            <person name="Jaffe D.B."/>
            <person name="Calvo S.E."/>
            <person name="Nusbaum C."/>
            <person name="Galagan J.E."/>
            <person name="Birren B.W."/>
        </authorList>
    </citation>
    <scope>NUCLEOTIDE SEQUENCE [LARGE SCALE GENOMIC DNA]</scope>
    <source>
        <strain>DSM 14603 / FGSC 9021 / UM521</strain>
    </source>
</reference>
<reference key="2">
    <citation type="submission" date="2014-09" db="EMBL/GenBank/DDBJ databases">
        <authorList>
            <person name="Gueldener U."/>
            <person name="Muensterkoetter M."/>
            <person name="Walter M.C."/>
            <person name="Mannhaupt G."/>
            <person name="Kahmann R."/>
        </authorList>
    </citation>
    <scope>GENOME REANNOTATION</scope>
    <source>
        <strain>DSM 14603 / FGSC 9021 / UM521</strain>
    </source>
</reference>
<reference key="3">
    <citation type="submission" date="2006-02" db="UniProtKB">
        <authorList>
            <person name="Pemberton T.J."/>
        </authorList>
    </citation>
    <scope>REVISION OF GENE MODEL</scope>
</reference>
<keyword id="KW-0413">Isomerase</keyword>
<keyword id="KW-0539">Nucleus</keyword>
<keyword id="KW-1185">Reference proteome</keyword>
<keyword id="KW-0697">Rotamase</keyword>
<protein>
    <recommendedName>
        <fullName>Peptidyl-prolyl cis-trans isomerase H</fullName>
        <shortName>PPIase H</shortName>
        <ecNumber>5.2.1.8</ecNumber>
    </recommendedName>
    <alternativeName>
        <fullName>Rotamase H</fullName>
    </alternativeName>
</protein>
<organism>
    <name type="scientific">Mycosarcoma maydis</name>
    <name type="common">Corn smut fungus</name>
    <name type="synonym">Ustilago maydis</name>
    <dbReference type="NCBI Taxonomy" id="5270"/>
    <lineage>
        <taxon>Eukaryota</taxon>
        <taxon>Fungi</taxon>
        <taxon>Dikarya</taxon>
        <taxon>Basidiomycota</taxon>
        <taxon>Ustilaginomycotina</taxon>
        <taxon>Ustilaginomycetes</taxon>
        <taxon>Ustilaginales</taxon>
        <taxon>Ustilaginaceae</taxon>
        <taxon>Mycosarcoma</taxon>
    </lineage>
</organism>